<proteinExistence type="inferred from homology"/>
<name>SYH_NITV2</name>
<sequence length="417" mass="45623">MSKITKIKGFADLFPPESDVFTRMESVARQVFGRYGFVELRTPILERTDLFCRSIGTETDVVQKEMYTFPDRKDRSLTMRPEATAGVMRAYIESGRHTQEPVSKLFTSGPMFRYERPQKGRMRQFHQINCEVLGPVEPHADAELVLMLMRFLTELGLTGLSLQINSLGCKECRPLYRKALSDFLASIDNAALCEDCRRRMETNPLRVLDCKVPGCRELTANAPTILEHNCPECRTHFDAVLRILDSRNVPYVLNDRLVRGLDYYNRTTFEVVSDSIGSQGSVAGGGRYDGLISQLGGPDVPGVGFACGMERLALMMPGADAPRPHFHVAVLDPAAQDAALLLAEDLRAQGLTGSVGFGAGSIKSRMRLAGKSGARACLILGGDELAAGTVVVKDMDSGEQETIGRDAVAARLLAAGA</sequence>
<organism>
    <name type="scientific">Nitratidesulfovibrio vulgaris (strain ATCC 29579 / DSM 644 / CCUG 34227 / NCIMB 8303 / VKM B-1760 / Hildenborough)</name>
    <name type="common">Desulfovibrio vulgaris</name>
    <dbReference type="NCBI Taxonomy" id="882"/>
    <lineage>
        <taxon>Bacteria</taxon>
        <taxon>Pseudomonadati</taxon>
        <taxon>Thermodesulfobacteriota</taxon>
        <taxon>Desulfovibrionia</taxon>
        <taxon>Desulfovibrionales</taxon>
        <taxon>Desulfovibrionaceae</taxon>
        <taxon>Nitratidesulfovibrio</taxon>
    </lineage>
</organism>
<reference key="1">
    <citation type="journal article" date="2004" name="Nat. Biotechnol.">
        <title>The genome sequence of the anaerobic, sulfate-reducing bacterium Desulfovibrio vulgaris Hildenborough.</title>
        <authorList>
            <person name="Heidelberg J.F."/>
            <person name="Seshadri R."/>
            <person name="Haveman S.A."/>
            <person name="Hemme C.L."/>
            <person name="Paulsen I.T."/>
            <person name="Kolonay J.F."/>
            <person name="Eisen J.A."/>
            <person name="Ward N.L."/>
            <person name="Methe B.A."/>
            <person name="Brinkac L.M."/>
            <person name="Daugherty S.C."/>
            <person name="DeBoy R.T."/>
            <person name="Dodson R.J."/>
            <person name="Durkin A.S."/>
            <person name="Madupu R."/>
            <person name="Nelson W.C."/>
            <person name="Sullivan S.A."/>
            <person name="Fouts D.E."/>
            <person name="Haft D.H."/>
            <person name="Selengut J."/>
            <person name="Peterson J.D."/>
            <person name="Davidsen T.M."/>
            <person name="Zafar N."/>
            <person name="Zhou L."/>
            <person name="Radune D."/>
            <person name="Dimitrov G."/>
            <person name="Hance M."/>
            <person name="Tran K."/>
            <person name="Khouri H.M."/>
            <person name="Gill J."/>
            <person name="Utterback T.R."/>
            <person name="Feldblyum T.V."/>
            <person name="Wall J.D."/>
            <person name="Voordouw G."/>
            <person name="Fraser C.M."/>
        </authorList>
    </citation>
    <scope>NUCLEOTIDE SEQUENCE [LARGE SCALE GENOMIC DNA]</scope>
    <source>
        <strain>ATCC 29579 / DSM 644 / CCUG 34227 / NCIMB 8303 / VKM B-1760 / Hildenborough</strain>
    </source>
</reference>
<keyword id="KW-0030">Aminoacyl-tRNA synthetase</keyword>
<keyword id="KW-0067">ATP-binding</keyword>
<keyword id="KW-0963">Cytoplasm</keyword>
<keyword id="KW-0436">Ligase</keyword>
<keyword id="KW-0547">Nucleotide-binding</keyword>
<keyword id="KW-0648">Protein biosynthesis</keyword>
<keyword id="KW-1185">Reference proteome</keyword>
<comment type="catalytic activity">
    <reaction evidence="1">
        <text>tRNA(His) + L-histidine + ATP = L-histidyl-tRNA(His) + AMP + diphosphate + H(+)</text>
        <dbReference type="Rhea" id="RHEA:17313"/>
        <dbReference type="Rhea" id="RHEA-COMP:9665"/>
        <dbReference type="Rhea" id="RHEA-COMP:9689"/>
        <dbReference type="ChEBI" id="CHEBI:15378"/>
        <dbReference type="ChEBI" id="CHEBI:30616"/>
        <dbReference type="ChEBI" id="CHEBI:33019"/>
        <dbReference type="ChEBI" id="CHEBI:57595"/>
        <dbReference type="ChEBI" id="CHEBI:78442"/>
        <dbReference type="ChEBI" id="CHEBI:78527"/>
        <dbReference type="ChEBI" id="CHEBI:456215"/>
        <dbReference type="EC" id="6.1.1.21"/>
    </reaction>
</comment>
<comment type="subunit">
    <text evidence="1">Homodimer.</text>
</comment>
<comment type="subcellular location">
    <subcellularLocation>
        <location evidence="1">Cytoplasm</location>
    </subcellularLocation>
</comment>
<comment type="similarity">
    <text evidence="1">Belongs to the class-II aminoacyl-tRNA synthetase family.</text>
</comment>
<gene>
    <name evidence="1" type="primary">hisS</name>
    <name type="ordered locus">DVU_3368</name>
</gene>
<accession>P62379</accession>
<dbReference type="EC" id="6.1.1.21" evidence="1"/>
<dbReference type="EMBL" id="AE017285">
    <property type="protein sequence ID" value="AAS97837.1"/>
    <property type="molecule type" value="Genomic_DNA"/>
</dbReference>
<dbReference type="RefSeq" id="WP_010940623.1">
    <property type="nucleotide sequence ID" value="NC_002937.3"/>
</dbReference>
<dbReference type="RefSeq" id="YP_012577.1">
    <property type="nucleotide sequence ID" value="NC_002937.3"/>
</dbReference>
<dbReference type="SMR" id="P62379"/>
<dbReference type="STRING" id="882.DVU_3368"/>
<dbReference type="PaxDb" id="882-DVU_3368"/>
<dbReference type="EnsemblBacteria" id="AAS97837">
    <property type="protein sequence ID" value="AAS97837"/>
    <property type="gene ID" value="DVU_3368"/>
</dbReference>
<dbReference type="KEGG" id="dvu:DVU_3368"/>
<dbReference type="PATRIC" id="fig|882.5.peg.3058"/>
<dbReference type="eggNOG" id="COG0124">
    <property type="taxonomic scope" value="Bacteria"/>
</dbReference>
<dbReference type="HOGENOM" id="CLU_025113_1_1_7"/>
<dbReference type="OrthoDB" id="9800814at2"/>
<dbReference type="PhylomeDB" id="P62379"/>
<dbReference type="Proteomes" id="UP000002194">
    <property type="component" value="Chromosome"/>
</dbReference>
<dbReference type="GO" id="GO:0005737">
    <property type="term" value="C:cytoplasm"/>
    <property type="evidence" value="ECO:0007669"/>
    <property type="project" value="UniProtKB-SubCell"/>
</dbReference>
<dbReference type="GO" id="GO:0005524">
    <property type="term" value="F:ATP binding"/>
    <property type="evidence" value="ECO:0007669"/>
    <property type="project" value="UniProtKB-UniRule"/>
</dbReference>
<dbReference type="GO" id="GO:0004821">
    <property type="term" value="F:histidine-tRNA ligase activity"/>
    <property type="evidence" value="ECO:0007669"/>
    <property type="project" value="UniProtKB-UniRule"/>
</dbReference>
<dbReference type="GO" id="GO:0006427">
    <property type="term" value="P:histidyl-tRNA aminoacylation"/>
    <property type="evidence" value="ECO:0007669"/>
    <property type="project" value="UniProtKB-UniRule"/>
</dbReference>
<dbReference type="CDD" id="cd00773">
    <property type="entry name" value="HisRS-like_core"/>
    <property type="match status" value="1"/>
</dbReference>
<dbReference type="CDD" id="cd00859">
    <property type="entry name" value="HisRS_anticodon"/>
    <property type="match status" value="1"/>
</dbReference>
<dbReference type="Gene3D" id="3.40.50.800">
    <property type="entry name" value="Anticodon-binding domain"/>
    <property type="match status" value="1"/>
</dbReference>
<dbReference type="Gene3D" id="3.30.930.10">
    <property type="entry name" value="Bira Bifunctional Protein, Domain 2"/>
    <property type="match status" value="1"/>
</dbReference>
<dbReference type="HAMAP" id="MF_00127">
    <property type="entry name" value="His_tRNA_synth"/>
    <property type="match status" value="1"/>
</dbReference>
<dbReference type="InterPro" id="IPR006195">
    <property type="entry name" value="aa-tRNA-synth_II"/>
</dbReference>
<dbReference type="InterPro" id="IPR045864">
    <property type="entry name" value="aa-tRNA-synth_II/BPL/LPL"/>
</dbReference>
<dbReference type="InterPro" id="IPR004154">
    <property type="entry name" value="Anticodon-bd"/>
</dbReference>
<dbReference type="InterPro" id="IPR036621">
    <property type="entry name" value="Anticodon-bd_dom_sf"/>
</dbReference>
<dbReference type="InterPro" id="IPR015807">
    <property type="entry name" value="His-tRNA-ligase"/>
</dbReference>
<dbReference type="InterPro" id="IPR041715">
    <property type="entry name" value="HisRS-like_core"/>
</dbReference>
<dbReference type="InterPro" id="IPR004516">
    <property type="entry name" value="HisRS/HisZ"/>
</dbReference>
<dbReference type="InterPro" id="IPR033656">
    <property type="entry name" value="HisRS_anticodon"/>
</dbReference>
<dbReference type="NCBIfam" id="TIGR00442">
    <property type="entry name" value="hisS"/>
    <property type="match status" value="1"/>
</dbReference>
<dbReference type="PANTHER" id="PTHR43707:SF1">
    <property type="entry name" value="HISTIDINE--TRNA LIGASE, MITOCHONDRIAL-RELATED"/>
    <property type="match status" value="1"/>
</dbReference>
<dbReference type="PANTHER" id="PTHR43707">
    <property type="entry name" value="HISTIDYL-TRNA SYNTHETASE"/>
    <property type="match status" value="1"/>
</dbReference>
<dbReference type="Pfam" id="PF03129">
    <property type="entry name" value="HGTP_anticodon"/>
    <property type="match status" value="1"/>
</dbReference>
<dbReference type="Pfam" id="PF13393">
    <property type="entry name" value="tRNA-synt_His"/>
    <property type="match status" value="1"/>
</dbReference>
<dbReference type="PIRSF" id="PIRSF001549">
    <property type="entry name" value="His-tRNA_synth"/>
    <property type="match status" value="1"/>
</dbReference>
<dbReference type="SUPFAM" id="SSF52954">
    <property type="entry name" value="Class II aaRS ABD-related"/>
    <property type="match status" value="1"/>
</dbReference>
<dbReference type="SUPFAM" id="SSF55681">
    <property type="entry name" value="Class II aaRS and biotin synthetases"/>
    <property type="match status" value="1"/>
</dbReference>
<dbReference type="PROSITE" id="PS50862">
    <property type="entry name" value="AA_TRNA_LIGASE_II"/>
    <property type="match status" value="1"/>
</dbReference>
<protein>
    <recommendedName>
        <fullName evidence="1">Histidine--tRNA ligase</fullName>
        <ecNumber evidence="1">6.1.1.21</ecNumber>
    </recommendedName>
    <alternativeName>
        <fullName evidence="1">Histidyl-tRNA synthetase</fullName>
        <shortName evidence="1">HisRS</shortName>
    </alternativeName>
</protein>
<evidence type="ECO:0000255" key="1">
    <source>
        <dbReference type="HAMAP-Rule" id="MF_00127"/>
    </source>
</evidence>
<feature type="chain" id="PRO_0000136155" description="Histidine--tRNA ligase">
    <location>
        <begin position="1"/>
        <end position="417"/>
    </location>
</feature>